<sequence length="389" mass="38717">MQYKKTLVASALAATTLAAYAPSEPWSTLTPTATYSGGVTDYASTFGIAVQPISTTSSASSAATTASSKAKRAASQIGDGQVQAATTTASVSTKSTAAAVSQIGDGQVQATTKTTAAAVSQIGDGQIQATTKTTSAKTTAAAVSQIGDGQIQATTTTLAPKSTAAAVSQIGDGQVQATTKTTAAAVSQIGDGQVQATTKTTAAAVSQIGDGQVQATTKTTAAAVSQIGDGQVQATTKTTAAAVSQITDGQVQATTKTTQAASQVSDGQVQATTATSASAAATSTDPVDAVSCKTSGTLEMNLKGGILTDGKGRIGSIVANRQFQFDGPPPQAGAIYAAGWSITPDGNLAIGDNDVFYQCLSGTFYNLYDEHIGSQCTPVHLEAIDLIDC</sequence>
<name>HS150_YEAS7</name>
<accession>A6ZQH3</accession>
<dbReference type="EMBL" id="AAFW02000044">
    <property type="protein sequence ID" value="EDN63225.1"/>
    <property type="molecule type" value="Genomic_DNA"/>
</dbReference>
<dbReference type="HOGENOM" id="CLU_039662_0_0_1"/>
<dbReference type="Proteomes" id="UP000007060">
    <property type="component" value="Unassembled WGS sequence"/>
</dbReference>
<dbReference type="GO" id="GO:0005576">
    <property type="term" value="C:extracellular region"/>
    <property type="evidence" value="ECO:0007669"/>
    <property type="project" value="UniProtKB-KW"/>
</dbReference>
<dbReference type="GO" id="GO:0009277">
    <property type="term" value="C:fungal-type cell wall"/>
    <property type="evidence" value="ECO:0007669"/>
    <property type="project" value="TreeGrafter"/>
</dbReference>
<dbReference type="GO" id="GO:0005199">
    <property type="term" value="F:structural constituent of cell wall"/>
    <property type="evidence" value="ECO:0007669"/>
    <property type="project" value="InterPro"/>
</dbReference>
<dbReference type="GO" id="GO:0031505">
    <property type="term" value="P:fungal-type cell wall organization"/>
    <property type="evidence" value="ECO:0007669"/>
    <property type="project" value="UniProtKB-ARBA"/>
</dbReference>
<dbReference type="InterPro" id="IPR054508">
    <property type="entry name" value="PIR1-like_C"/>
</dbReference>
<dbReference type="InterPro" id="IPR051153">
    <property type="entry name" value="Yeast_CWMannoprotein_PIR"/>
</dbReference>
<dbReference type="InterPro" id="IPR000420">
    <property type="entry name" value="Yeast_PIR_rpt"/>
</dbReference>
<dbReference type="PANTHER" id="PTHR47254">
    <property type="entry name" value="CELL WALL MANNOPROTEIN CIS3-RELATED"/>
    <property type="match status" value="1"/>
</dbReference>
<dbReference type="PANTHER" id="PTHR47254:SF1">
    <property type="entry name" value="CELL WALL MANNOPROTEIN CIS3-RELATED"/>
    <property type="match status" value="1"/>
</dbReference>
<dbReference type="Pfam" id="PF00399">
    <property type="entry name" value="PIR"/>
    <property type="match status" value="10"/>
</dbReference>
<dbReference type="Pfam" id="PF22799">
    <property type="entry name" value="PIR1-like_C"/>
    <property type="match status" value="1"/>
</dbReference>
<dbReference type="PROSITE" id="PS00929">
    <property type="entry name" value="PIR_REPEAT_1"/>
    <property type="match status" value="10"/>
</dbReference>
<dbReference type="PROSITE" id="PS50256">
    <property type="entry name" value="PIR_REPEAT_2"/>
    <property type="match status" value="10"/>
</dbReference>
<evidence type="ECO:0000250" key="1"/>
<evidence type="ECO:0000305" key="2"/>
<organism>
    <name type="scientific">Saccharomyces cerevisiae (strain YJM789)</name>
    <name type="common">Baker's yeast</name>
    <dbReference type="NCBI Taxonomy" id="307796"/>
    <lineage>
        <taxon>Eukaryota</taxon>
        <taxon>Fungi</taxon>
        <taxon>Dikarya</taxon>
        <taxon>Ascomycota</taxon>
        <taxon>Saccharomycotina</taxon>
        <taxon>Saccharomycetes</taxon>
        <taxon>Saccharomycetales</taxon>
        <taxon>Saccharomycetaceae</taxon>
        <taxon>Saccharomyces</taxon>
    </lineage>
</organism>
<feature type="signal peptide" evidence="1">
    <location>
        <begin position="1"/>
        <end position="18"/>
    </location>
</feature>
<feature type="propeptide" id="PRO_0000377618" evidence="1">
    <location>
        <begin position="19"/>
        <end position="72"/>
    </location>
</feature>
<feature type="chain" id="PRO_0000377619" description="Cell wall mannoprotein HSP150">
    <location>
        <begin position="73"/>
        <end position="389"/>
    </location>
</feature>
<feature type="repeat" description="PIR1/2/3 1">
    <location>
        <begin position="71"/>
        <end position="89"/>
    </location>
</feature>
<feature type="repeat" description="PIR1/2/3 2">
    <location>
        <begin position="97"/>
        <end position="115"/>
    </location>
</feature>
<feature type="repeat" description="PIR1/2/3 3">
    <location>
        <begin position="116"/>
        <end position="134"/>
    </location>
</feature>
<feature type="repeat" description="PIR1/2/3 4">
    <location>
        <begin position="140"/>
        <end position="158"/>
    </location>
</feature>
<feature type="repeat" description="PIR1/2/3 5">
    <location>
        <begin position="164"/>
        <end position="182"/>
    </location>
</feature>
<feature type="repeat" description="PIR1/2/3 6">
    <location>
        <begin position="183"/>
        <end position="201"/>
    </location>
</feature>
<feature type="repeat" description="PIR1/2/3 7">
    <location>
        <begin position="202"/>
        <end position="220"/>
    </location>
</feature>
<feature type="repeat" description="PIR1/2/3 8">
    <location>
        <begin position="221"/>
        <end position="239"/>
    </location>
</feature>
<feature type="repeat" description="PIR1/2/3 9">
    <location>
        <begin position="240"/>
        <end position="257"/>
    </location>
</feature>
<feature type="repeat" description="PIR1/2/3 10">
    <location>
        <begin position="258"/>
        <end position="276"/>
    </location>
</feature>
<feature type="site" description="Cleavage; by KEX2" evidence="1">
    <location>
        <begin position="72"/>
        <end position="73"/>
    </location>
</feature>
<feature type="site" description="Covalent attachment to cell wall glycan" evidence="1">
    <location>
        <position position="81"/>
    </location>
</feature>
<feature type="site" description="Covalent attachment to cell wall glycan" evidence="1">
    <location>
        <position position="107"/>
    </location>
</feature>
<feature type="site" description="Covalent attachment to cell wall glycan" evidence="1">
    <location>
        <position position="126"/>
    </location>
</feature>
<feature type="site" description="Covalent attachment to cell wall glycan" evidence="1">
    <location>
        <position position="150"/>
    </location>
</feature>
<feature type="site" description="Covalent attachment to cell wall glycan" evidence="1">
    <location>
        <position position="174"/>
    </location>
</feature>
<feature type="site" description="Covalent attachment to cell wall glycan" evidence="1">
    <location>
        <position position="193"/>
    </location>
</feature>
<feature type="site" description="Covalent attachment to cell wall glycan" evidence="1">
    <location>
        <position position="212"/>
    </location>
</feature>
<feature type="site" description="Covalent attachment to cell wall glycan" evidence="1">
    <location>
        <position position="231"/>
    </location>
</feature>
<feature type="site" description="Covalent attachment to cell wall glycan" evidence="1">
    <location>
        <position position="250"/>
    </location>
</feature>
<feature type="site" description="Covalent attachment to cell wall glycan" evidence="1">
    <location>
        <position position="268"/>
    </location>
</feature>
<gene>
    <name type="primary">HSP150</name>
    <name type="ORF">SCY_3134</name>
</gene>
<protein>
    <recommendedName>
        <fullName>Cell wall mannoprotein HSP150</fullName>
    </recommendedName>
    <alternativeName>
        <fullName>150 kDa heat shock glycoprotein</fullName>
    </alternativeName>
    <alternativeName>
        <fullName>Covalently-linked cell wall protein 7</fullName>
    </alternativeName>
    <alternativeName>
        <fullName>Protein with internal repeats 2</fullName>
    </alternativeName>
</protein>
<keyword id="KW-0134">Cell wall</keyword>
<keyword id="KW-0961">Cell wall biogenesis/degradation</keyword>
<keyword id="KW-0165">Cleavage on pair of basic residues</keyword>
<keyword id="KW-0325">Glycoprotein</keyword>
<keyword id="KW-0677">Repeat</keyword>
<keyword id="KW-0964">Secreted</keyword>
<keyword id="KW-0732">Signal</keyword>
<keyword id="KW-0346">Stress response</keyword>
<reference key="1">
    <citation type="journal article" date="2007" name="Proc. Natl. Acad. Sci. U.S.A.">
        <title>Genome sequencing and comparative analysis of Saccharomyces cerevisiae strain YJM789.</title>
        <authorList>
            <person name="Wei W."/>
            <person name="McCusker J.H."/>
            <person name="Hyman R.W."/>
            <person name="Jones T."/>
            <person name="Ning Y."/>
            <person name="Cao Z."/>
            <person name="Gu Z."/>
            <person name="Bruno D."/>
            <person name="Miranda M."/>
            <person name="Nguyen M."/>
            <person name="Wilhelmy J."/>
            <person name="Komp C."/>
            <person name="Tamse R."/>
            <person name="Wang X."/>
            <person name="Jia P."/>
            <person name="Luedi P."/>
            <person name="Oefner P.J."/>
            <person name="David L."/>
            <person name="Dietrich F.S."/>
            <person name="Li Y."/>
            <person name="Davis R.W."/>
            <person name="Steinmetz L.M."/>
        </authorList>
    </citation>
    <scope>NUCLEOTIDE SEQUENCE [LARGE SCALE GENOMIC DNA]</scope>
    <source>
        <strain>YJM789</strain>
    </source>
</reference>
<proteinExistence type="inferred from homology"/>
<comment type="function">
    <text evidence="1">Component of the outer cell wall layer. Required for stability of the cell wall and for optimal growth. Required for resistance against several antifungal and cell wall-perturbing agents and for tolerance to heat shock (By similarity).</text>
</comment>
<comment type="subcellular location">
    <subcellularLocation>
        <location evidence="1">Secreted</location>
        <location evidence="1">Cell wall</location>
    </subcellularLocation>
    <text evidence="1">Covalently attached to the cell wall.</text>
</comment>
<comment type="domain">
    <text evidence="1">The PIR1/2/3 repeats are required for the covalent linkage to the cell wall (By similarity). Their number varies among different strains of S.cerevisiae.</text>
</comment>
<comment type="PTM">
    <text evidence="1">Covalently linked to beta-1,3-glucan of the inner cell wall layer via an alkali-sensitive ester linkage between the gamma-carboxyl group of glutamic acids, arising from specific glutamines within the PIR1/2/3 repeats, and hydroxyl groups of glucoses of beta-1,3-glucan chains.</text>
</comment>
<comment type="PTM">
    <text evidence="1">The propeptide is cleaved off in the late Golgi. While both peptides are secreted, only a fraction of the mature glycoprotein is incorporated into the cell wall (By similarity).</text>
</comment>
<comment type="PTM">
    <text evidence="1">O-glycosylated. Extensively O-mannosylated (By similarity).</text>
</comment>
<comment type="similarity">
    <text evidence="2">Belongs to the PIR protein family.</text>
</comment>